<dbReference type="EMBL" id="EF115543">
    <property type="protein sequence ID" value="ABK79562.1"/>
    <property type="molecule type" value="Genomic_DNA"/>
</dbReference>
<dbReference type="RefSeq" id="YP_874718.1">
    <property type="nucleotide sequence ID" value="NC_008591.1"/>
</dbReference>
<dbReference type="SMR" id="A1E9Z0"/>
<dbReference type="GeneID" id="4524972"/>
<dbReference type="GO" id="GO:0009507">
    <property type="term" value="C:chloroplast"/>
    <property type="evidence" value="ECO:0007669"/>
    <property type="project" value="UniProtKB-SubCell"/>
</dbReference>
<dbReference type="GO" id="GO:0005739">
    <property type="term" value="C:mitochondrion"/>
    <property type="evidence" value="ECO:0007669"/>
    <property type="project" value="GOC"/>
</dbReference>
<dbReference type="GO" id="GO:0015935">
    <property type="term" value="C:small ribosomal subunit"/>
    <property type="evidence" value="ECO:0007669"/>
    <property type="project" value="TreeGrafter"/>
</dbReference>
<dbReference type="GO" id="GO:0003735">
    <property type="term" value="F:structural constituent of ribosome"/>
    <property type="evidence" value="ECO:0007669"/>
    <property type="project" value="InterPro"/>
</dbReference>
<dbReference type="GO" id="GO:0032543">
    <property type="term" value="P:mitochondrial translation"/>
    <property type="evidence" value="ECO:0007669"/>
    <property type="project" value="TreeGrafter"/>
</dbReference>
<dbReference type="FunFam" id="3.30.1320.10:FF:000003">
    <property type="entry name" value="30S ribosomal protein S16, chloroplastic"/>
    <property type="match status" value="1"/>
</dbReference>
<dbReference type="Gene3D" id="3.30.1320.10">
    <property type="match status" value="1"/>
</dbReference>
<dbReference type="HAMAP" id="MF_00385">
    <property type="entry name" value="Ribosomal_bS16"/>
    <property type="match status" value="1"/>
</dbReference>
<dbReference type="InterPro" id="IPR000307">
    <property type="entry name" value="Ribosomal_bS16"/>
</dbReference>
<dbReference type="InterPro" id="IPR020592">
    <property type="entry name" value="Ribosomal_bS16_CS"/>
</dbReference>
<dbReference type="InterPro" id="IPR023803">
    <property type="entry name" value="Ribosomal_bS16_dom_sf"/>
</dbReference>
<dbReference type="NCBIfam" id="TIGR00002">
    <property type="entry name" value="S16"/>
    <property type="match status" value="1"/>
</dbReference>
<dbReference type="PANTHER" id="PTHR12919">
    <property type="entry name" value="30S RIBOSOMAL PROTEIN S16"/>
    <property type="match status" value="1"/>
</dbReference>
<dbReference type="PANTHER" id="PTHR12919:SF20">
    <property type="entry name" value="SMALL RIBOSOMAL SUBUNIT PROTEIN BS16M"/>
    <property type="match status" value="1"/>
</dbReference>
<dbReference type="Pfam" id="PF00886">
    <property type="entry name" value="Ribosomal_S16"/>
    <property type="match status" value="1"/>
</dbReference>
<dbReference type="SUPFAM" id="SSF54565">
    <property type="entry name" value="Ribosomal protein S16"/>
    <property type="match status" value="1"/>
</dbReference>
<dbReference type="PROSITE" id="PS00732">
    <property type="entry name" value="RIBOSOMAL_S16"/>
    <property type="match status" value="1"/>
</dbReference>
<evidence type="ECO:0000255" key="1">
    <source>
        <dbReference type="HAMAP-Rule" id="MF_00385"/>
    </source>
</evidence>
<evidence type="ECO:0000305" key="2"/>
<comment type="subcellular location">
    <subcellularLocation>
        <location>Plastid</location>
        <location>Chloroplast</location>
    </subcellularLocation>
</comment>
<comment type="similarity">
    <text evidence="1">Belongs to the bacterial ribosomal protein bS16 family.</text>
</comment>
<gene>
    <name evidence="1" type="primary">rps16</name>
</gene>
<reference key="1">
    <citation type="journal article" date="2007" name="Theor. Appl. Genet.">
        <title>Complete chloroplast genome sequences of Hordeum vulgare, Sorghum bicolor and Agrostis stolonifera, and comparative analyses with other grass genomes.</title>
        <authorList>
            <person name="Saski C."/>
            <person name="Lee S.-B."/>
            <person name="Fjellheim S."/>
            <person name="Guda C."/>
            <person name="Jansen R.K."/>
            <person name="Luo H."/>
            <person name="Tomkins J."/>
            <person name="Rognli O.A."/>
            <person name="Daniell H."/>
            <person name="Clarke J.L."/>
        </authorList>
    </citation>
    <scope>NUCLEOTIDE SEQUENCE [LARGE SCALE GENOMIC DNA]</scope>
    <source>
        <strain>cv. Penn A-4</strain>
    </source>
</reference>
<sequence length="85" mass="10068">MVKLRLKRCGRKQQAVYRIVAIDVRSRREGRDLRKVGFYDPIKNQTCLNVPAILYFLEKGAQPTRTVYDILRKAELFKEKERILS</sequence>
<geneLocation type="chloroplast"/>
<protein>
    <recommendedName>
        <fullName evidence="1">Small ribosomal subunit protein bS16c</fullName>
    </recommendedName>
    <alternativeName>
        <fullName evidence="2">30S ribosomal protein S16, chloroplastic</fullName>
    </alternativeName>
</protein>
<accession>A1E9Z0</accession>
<organism>
    <name type="scientific">Agrostis stolonifera</name>
    <name type="common">Creeping bentgrass</name>
    <dbReference type="NCBI Taxonomy" id="63632"/>
    <lineage>
        <taxon>Eukaryota</taxon>
        <taxon>Viridiplantae</taxon>
        <taxon>Streptophyta</taxon>
        <taxon>Embryophyta</taxon>
        <taxon>Tracheophyta</taxon>
        <taxon>Spermatophyta</taxon>
        <taxon>Magnoliopsida</taxon>
        <taxon>Liliopsida</taxon>
        <taxon>Poales</taxon>
        <taxon>Poaceae</taxon>
        <taxon>BOP clade</taxon>
        <taxon>Pooideae</taxon>
        <taxon>Poodae</taxon>
        <taxon>Poeae</taxon>
        <taxon>Poeae Chloroplast Group 1 (Aveneae type)</taxon>
        <taxon>Agrostidodinae</taxon>
        <taxon>Agrostidinae</taxon>
        <taxon>Agrostis</taxon>
    </lineage>
</organism>
<feature type="chain" id="PRO_0000276937" description="Small ribosomal subunit protein bS16c">
    <location>
        <begin position="1"/>
        <end position="85"/>
    </location>
</feature>
<keyword id="KW-0150">Chloroplast</keyword>
<keyword id="KW-0934">Plastid</keyword>
<keyword id="KW-0687">Ribonucleoprotein</keyword>
<keyword id="KW-0689">Ribosomal protein</keyword>
<proteinExistence type="inferred from homology"/>
<name>RR16_AGRST</name>